<reference key="1">
    <citation type="journal article" date="1998" name="Science">
        <title>Genome sequence of the nematode C. elegans: a platform for investigating biology.</title>
        <authorList>
            <consortium name="The C. elegans sequencing consortium"/>
        </authorList>
    </citation>
    <scope>NUCLEOTIDE SEQUENCE [LARGE SCALE GENOMIC DNA]</scope>
    <source>
        <strain>Bristol N2</strain>
    </source>
</reference>
<reference evidence="7" key="2">
    <citation type="submission" date="2000-08" db="EMBL/GenBank/DDBJ databases">
        <title>The Caenorhabditis elegans transcriptome project, a complementary view of the genome.</title>
        <authorList>
            <person name="Kohara Y."/>
            <person name="Shin'i T."/>
            <person name="Suzuki Y."/>
            <person name="Sugano S."/>
            <person name="Potdevin M."/>
            <person name="Thierry-Mieg Y."/>
            <person name="Thierry-Mieg D."/>
            <person name="Thierry-Mieg J."/>
        </authorList>
    </citation>
    <scope>NUCLEOTIDE SEQUENCE [LARGE SCALE MRNA]</scope>
    <source>
        <strain>Bristol N2</strain>
    </source>
</reference>
<reference key="3">
    <citation type="journal article" date="2003" name="Nat. Biotechnol.">
        <title>Lectin affinity capture, isotope-coded tagging and mass spectrometry to identify N-linked glycoproteins.</title>
        <authorList>
            <person name="Kaji H."/>
            <person name="Saito H."/>
            <person name="Yamauchi Y."/>
            <person name="Shinkawa T."/>
            <person name="Taoka M."/>
            <person name="Hirabayashi J."/>
            <person name="Kasai K."/>
            <person name="Takahashi N."/>
            <person name="Isobe T."/>
        </authorList>
    </citation>
    <scope>GLYCOSYLATION [LARGE SCALE ANALYSIS] AT ASN-79</scope>
    <scope>IDENTIFICATION BY MASS SPECTROMETRY</scope>
    <source>
        <strain>Bristol N2</strain>
    </source>
</reference>
<reference key="4">
    <citation type="journal article" date="2007" name="Mol. Cell. Proteomics">
        <title>Proteomics reveals N-linked glycoprotein diversity in Caenorhabditis elegans and suggests an atypical translocation mechanism for integral membrane proteins.</title>
        <authorList>
            <person name="Kaji H."/>
            <person name="Kamiie J."/>
            <person name="Kawakami H."/>
            <person name="Kido K."/>
            <person name="Yamauchi Y."/>
            <person name="Shinkawa T."/>
            <person name="Taoka M."/>
            <person name="Takahashi N."/>
            <person name="Isobe T."/>
        </authorList>
    </citation>
    <scope>GLYCOSYLATION [LARGE SCALE ANALYSIS] AT ASN-79</scope>
    <scope>IDENTIFICATION BY MASS SPECTROMETRY</scope>
    <source>
        <strain>Bristol N2</strain>
    </source>
</reference>
<name>TIMPL_CAEEL</name>
<feature type="signal peptide" evidence="3">
    <location>
        <begin position="1"/>
        <end position="20"/>
    </location>
</feature>
<feature type="chain" id="PRO_0000034352" description="Putative metalloproteinase inhibitor tag-225">
    <location>
        <begin position="21"/>
        <end position="158"/>
    </location>
</feature>
<feature type="domain" description="NTR" evidence="4">
    <location>
        <begin position="21"/>
        <end position="158"/>
    </location>
</feature>
<feature type="region of interest" description="Involved in metalloproteinase-binding" evidence="1">
    <location>
        <begin position="21"/>
        <end position="25"/>
    </location>
</feature>
<feature type="region of interest" description="Involved in metalloproteinase-binding" evidence="1">
    <location>
        <begin position="93"/>
        <end position="94"/>
    </location>
</feature>
<feature type="binding site" evidence="1">
    <location>
        <position position="21"/>
    </location>
    <ligand>
        <name>Zn(2+)</name>
        <dbReference type="ChEBI" id="CHEBI:29105"/>
        <note>ligand shared with metalloproteinase partner</note>
    </ligand>
</feature>
<feature type="glycosylation site" description="N-linked (GlcNAc...) asparagine" evidence="5 6">
    <location>
        <position position="79"/>
    </location>
</feature>
<feature type="disulfide bond" evidence="4">
    <location>
        <begin position="21"/>
        <end position="96"/>
    </location>
</feature>
<feature type="disulfide bond" evidence="4">
    <location>
        <begin position="23"/>
        <end position="123"/>
    </location>
</feature>
<feature type="disulfide bond" evidence="4">
    <location>
        <begin position="33"/>
        <end position="158"/>
    </location>
</feature>
<comment type="function">
    <text evidence="1">Complexes with metalloproteinases and irreversibly inactivates them by binding to their catalytic zinc cofactor.</text>
</comment>
<comment type="subcellular location">
    <subcellularLocation>
        <location evidence="2 7">Secreted</location>
    </subcellularLocation>
</comment>
<comment type="similarity">
    <text evidence="7">Belongs to the protease inhibitor I35 (TIMP) family.</text>
</comment>
<sequence length="158" mass="17465">MQNLSLSLVILSVLIAVTLACKCREQSTKESFCNAHWVSHVKVKVRVGKQGLPEGSERKGLNNLRYTVQHVEVFKKPSNMTTLPDEIFTPSEAPACGLKIAAGHEYLLAGRVEGPNALYTVLCGQVLPDDRSQTSFENVLEWKNVPQTLQSQVKSIKC</sequence>
<accession>Q21265</accession>
<proteinExistence type="evidence at protein level"/>
<keyword id="KW-1015">Disulfide bond</keyword>
<keyword id="KW-0325">Glycoprotein</keyword>
<keyword id="KW-0479">Metal-binding</keyword>
<keyword id="KW-0481">Metalloenzyme inhibitor</keyword>
<keyword id="KW-0483">Metalloprotease inhibitor</keyword>
<keyword id="KW-0646">Protease inhibitor</keyword>
<keyword id="KW-1185">Reference proteome</keyword>
<keyword id="KW-0964">Secreted</keyword>
<keyword id="KW-0732">Signal</keyword>
<keyword id="KW-0862">Zinc</keyword>
<dbReference type="EMBL" id="FO080570">
    <property type="protein sequence ID" value="CCD64760.1"/>
    <property type="molecule type" value="Genomic_DNA"/>
</dbReference>
<dbReference type="EMBL" id="AF303253">
    <property type="protein sequence ID" value="AAG50211.1"/>
    <property type="molecule type" value="mRNA"/>
</dbReference>
<dbReference type="PIR" id="F89123">
    <property type="entry name" value="F89123"/>
</dbReference>
<dbReference type="SMR" id="Q21265"/>
<dbReference type="BioGRID" id="44239">
    <property type="interactions" value="4"/>
</dbReference>
<dbReference type="FunCoup" id="Q21265">
    <property type="interactions" value="82"/>
</dbReference>
<dbReference type="STRING" id="6239.K07C11.5.2"/>
<dbReference type="GlyCosmos" id="Q21265">
    <property type="glycosylation" value="1 site, No reported glycans"/>
</dbReference>
<dbReference type="iPTMnet" id="Q21265"/>
<dbReference type="PaxDb" id="6239-K07C11.5"/>
<dbReference type="PeptideAtlas" id="Q21265"/>
<dbReference type="EnsemblMetazoa" id="K07C11.5.1">
    <property type="protein sequence ID" value="K07C11.5.1"/>
    <property type="gene ID" value="WBGene00019478"/>
</dbReference>
<dbReference type="KEGG" id="cel:CELE_K07C11.5"/>
<dbReference type="UCSC" id="K07C11.5">
    <property type="organism name" value="c. elegans"/>
</dbReference>
<dbReference type="AGR" id="WB:WBGene00019478"/>
<dbReference type="CTD" id="179197"/>
<dbReference type="WormBase" id="K07C11.5">
    <property type="protein sequence ID" value="CE07348"/>
    <property type="gene ID" value="WBGene00019478"/>
    <property type="gene designation" value="cri-2"/>
</dbReference>
<dbReference type="eggNOG" id="KOG4745">
    <property type="taxonomic scope" value="Eukaryota"/>
</dbReference>
<dbReference type="GeneTree" id="ENSGT00940000169308"/>
<dbReference type="HOGENOM" id="CLU_1688854_0_0_1"/>
<dbReference type="InParanoid" id="Q21265"/>
<dbReference type="OMA" id="YENVLEW"/>
<dbReference type="OrthoDB" id="5824612at2759"/>
<dbReference type="PhylomeDB" id="Q21265"/>
<dbReference type="Reactome" id="R-CEL-114608">
    <property type="pathway name" value="Platelet degranulation"/>
</dbReference>
<dbReference type="Reactome" id="R-CEL-1592389">
    <property type="pathway name" value="Activation of Matrix Metalloproteinases"/>
</dbReference>
<dbReference type="Reactome" id="R-CEL-381426">
    <property type="pathway name" value="Regulation of Insulin-like Growth Factor (IGF) transport and uptake by Insulin-like Growth Factor Binding Proteins (IGFBPs)"/>
</dbReference>
<dbReference type="Reactome" id="R-CEL-6798695">
    <property type="pathway name" value="Neutrophil degranulation"/>
</dbReference>
<dbReference type="Reactome" id="R-CEL-8957275">
    <property type="pathway name" value="Post-translational protein phosphorylation"/>
</dbReference>
<dbReference type="PRO" id="PR:Q21265"/>
<dbReference type="Proteomes" id="UP000001940">
    <property type="component" value="Chromosome V"/>
</dbReference>
<dbReference type="Bgee" id="WBGene00019478">
    <property type="expression patterns" value="Expressed in larva and 4 other cell types or tissues"/>
</dbReference>
<dbReference type="GO" id="GO:0031012">
    <property type="term" value="C:extracellular matrix"/>
    <property type="evidence" value="ECO:0000318"/>
    <property type="project" value="GO_Central"/>
</dbReference>
<dbReference type="GO" id="GO:0005615">
    <property type="term" value="C:extracellular space"/>
    <property type="evidence" value="ECO:0000318"/>
    <property type="project" value="GO_Central"/>
</dbReference>
<dbReference type="GO" id="GO:0046872">
    <property type="term" value="F:metal ion binding"/>
    <property type="evidence" value="ECO:0007669"/>
    <property type="project" value="UniProtKB-KW"/>
</dbReference>
<dbReference type="GO" id="GO:0008191">
    <property type="term" value="F:metalloendopeptidase inhibitor activity"/>
    <property type="evidence" value="ECO:0000318"/>
    <property type="project" value="GO_Central"/>
</dbReference>
<dbReference type="GO" id="GO:0051045">
    <property type="term" value="P:negative regulation of membrane protein ectodomain proteolysis"/>
    <property type="evidence" value="ECO:0000318"/>
    <property type="project" value="GO_Central"/>
</dbReference>
<dbReference type="CDD" id="cd03577">
    <property type="entry name" value="NTR_TIMP_like"/>
    <property type="match status" value="1"/>
</dbReference>
<dbReference type="FunFam" id="2.40.50.120:FF:000024">
    <property type="entry name" value="Putative metalloproteinase inhibitor tag-225"/>
    <property type="match status" value="1"/>
</dbReference>
<dbReference type="Gene3D" id="2.40.50.120">
    <property type="match status" value="1"/>
</dbReference>
<dbReference type="InterPro" id="IPR001134">
    <property type="entry name" value="Netrin_domain"/>
</dbReference>
<dbReference type="InterPro" id="IPR001820">
    <property type="entry name" value="TIMP"/>
</dbReference>
<dbReference type="InterPro" id="IPR008993">
    <property type="entry name" value="TIMP-like_OB-fold"/>
</dbReference>
<dbReference type="PANTHER" id="PTHR11844">
    <property type="entry name" value="METALLOPROTEASE INHIBITOR"/>
    <property type="match status" value="1"/>
</dbReference>
<dbReference type="PANTHER" id="PTHR11844:SF29">
    <property type="entry name" value="METALLOPROTEINASE INHIBITOR TAG-225-RELATED"/>
    <property type="match status" value="1"/>
</dbReference>
<dbReference type="Pfam" id="PF00965">
    <property type="entry name" value="TIMP"/>
    <property type="match status" value="1"/>
</dbReference>
<dbReference type="SMART" id="SM00206">
    <property type="entry name" value="NTR"/>
    <property type="match status" value="1"/>
</dbReference>
<dbReference type="SUPFAM" id="SSF50242">
    <property type="entry name" value="TIMP-like"/>
    <property type="match status" value="1"/>
</dbReference>
<dbReference type="PROSITE" id="PS50189">
    <property type="entry name" value="NTR"/>
    <property type="match status" value="1"/>
</dbReference>
<evidence type="ECO:0000250" key="1"/>
<evidence type="ECO:0000250" key="2">
    <source>
        <dbReference type="UniProtKB" id="P16035"/>
    </source>
</evidence>
<evidence type="ECO:0000255" key="3"/>
<evidence type="ECO:0000255" key="4">
    <source>
        <dbReference type="PROSITE-ProRule" id="PRU00295"/>
    </source>
</evidence>
<evidence type="ECO:0000269" key="5">
    <source>
    </source>
</evidence>
<evidence type="ECO:0000269" key="6">
    <source>
    </source>
</evidence>
<evidence type="ECO:0000305" key="7"/>
<evidence type="ECO:0000312" key="8">
    <source>
        <dbReference type="EMBL" id="AAG50211.1"/>
    </source>
</evidence>
<organism evidence="8">
    <name type="scientific">Caenorhabditis elegans</name>
    <dbReference type="NCBI Taxonomy" id="6239"/>
    <lineage>
        <taxon>Eukaryota</taxon>
        <taxon>Metazoa</taxon>
        <taxon>Ecdysozoa</taxon>
        <taxon>Nematoda</taxon>
        <taxon>Chromadorea</taxon>
        <taxon>Rhabditida</taxon>
        <taxon>Rhabditina</taxon>
        <taxon>Rhabditomorpha</taxon>
        <taxon>Rhabditoidea</taxon>
        <taxon>Rhabditidae</taxon>
        <taxon>Peloderinae</taxon>
        <taxon>Caenorhabditis</taxon>
    </lineage>
</organism>
<gene>
    <name type="primary">tag-225</name>
    <name type="ORF">K07C11.5</name>
</gene>
<protein>
    <recommendedName>
        <fullName>Putative metalloproteinase inhibitor tag-225</fullName>
    </recommendedName>
    <alternativeName>
        <fullName>TIMP-like protein</fullName>
    </alternativeName>
</protein>